<feature type="chain" id="PRO_0000106940" description="Uncharacterized protein MJ0579">
    <location>
        <begin position="1"/>
        <end position="269"/>
    </location>
</feature>
<feature type="binding site" evidence="1">
    <location>
        <begin position="12"/>
        <end position="19"/>
    </location>
    <ligand>
        <name>ATP</name>
        <dbReference type="ChEBI" id="CHEBI:30616"/>
    </ligand>
</feature>
<feature type="binding site" evidence="1">
    <location>
        <begin position="130"/>
        <end position="137"/>
    </location>
    <ligand>
        <name>ATP</name>
        <dbReference type="ChEBI" id="CHEBI:30616"/>
    </ligand>
</feature>
<proteinExistence type="predicted"/>
<dbReference type="EMBL" id="L77117">
    <property type="protein sequence ID" value="AAB98570.1"/>
    <property type="molecule type" value="Genomic_DNA"/>
</dbReference>
<dbReference type="PIR" id="C64372">
    <property type="entry name" value="C64372"/>
</dbReference>
<dbReference type="SMR" id="Q57999"/>
<dbReference type="STRING" id="243232.MJ_0579"/>
<dbReference type="PaxDb" id="243232-MJ_0579"/>
<dbReference type="EnsemblBacteria" id="AAB98570">
    <property type="protein sequence ID" value="AAB98570"/>
    <property type="gene ID" value="MJ_0579"/>
</dbReference>
<dbReference type="KEGG" id="mja:MJ_0579"/>
<dbReference type="eggNOG" id="arCOG04073">
    <property type="taxonomic scope" value="Archaea"/>
</dbReference>
<dbReference type="HOGENOM" id="CLU_067767_0_0_2"/>
<dbReference type="InParanoid" id="Q57999"/>
<dbReference type="PhylomeDB" id="Q57999"/>
<dbReference type="Proteomes" id="UP000000805">
    <property type="component" value="Chromosome"/>
</dbReference>
<dbReference type="GO" id="GO:0005524">
    <property type="term" value="F:ATP binding"/>
    <property type="evidence" value="ECO:0007669"/>
    <property type="project" value="UniProtKB-KW"/>
</dbReference>
<dbReference type="Gene3D" id="3.40.50.300">
    <property type="entry name" value="P-loop containing nucleotide triphosphate hydrolases"/>
    <property type="match status" value="1"/>
</dbReference>
<dbReference type="InterPro" id="IPR002586">
    <property type="entry name" value="CobQ/CobB/MinD/ParA_Nub-bd_dom"/>
</dbReference>
<dbReference type="InterPro" id="IPR027417">
    <property type="entry name" value="P-loop_NTPase"/>
</dbReference>
<dbReference type="PANTHER" id="PTHR43063">
    <property type="entry name" value="4FE-4S CLUSTER CONTAINING PARA FAMILY ATPASE PROTEIN"/>
    <property type="match status" value="1"/>
</dbReference>
<dbReference type="PANTHER" id="PTHR43063:SF1">
    <property type="entry name" value="4FE-4S CLUSTER CONTAINING PARA FAMILY ATPASE PROTEIN"/>
    <property type="match status" value="1"/>
</dbReference>
<dbReference type="Pfam" id="PF01656">
    <property type="entry name" value="CbiA"/>
    <property type="match status" value="1"/>
</dbReference>
<dbReference type="SUPFAM" id="SSF52540">
    <property type="entry name" value="P-loop containing nucleoside triphosphate hydrolases"/>
    <property type="match status" value="1"/>
</dbReference>
<comment type="similarity">
    <text evidence="2">To M.jannaschii MJ0578.</text>
</comment>
<protein>
    <recommendedName>
        <fullName>Uncharacterized protein MJ0579</fullName>
    </recommendedName>
</protein>
<reference key="1">
    <citation type="journal article" date="1996" name="Science">
        <title>Complete genome sequence of the methanogenic archaeon, Methanococcus jannaschii.</title>
        <authorList>
            <person name="Bult C.J."/>
            <person name="White O."/>
            <person name="Olsen G.J."/>
            <person name="Zhou L."/>
            <person name="Fleischmann R.D."/>
            <person name="Sutton G.G."/>
            <person name="Blake J.A."/>
            <person name="FitzGerald L.M."/>
            <person name="Clayton R.A."/>
            <person name="Gocayne J.D."/>
            <person name="Kerlavage A.R."/>
            <person name="Dougherty B.A."/>
            <person name="Tomb J.-F."/>
            <person name="Adams M.D."/>
            <person name="Reich C.I."/>
            <person name="Overbeek R."/>
            <person name="Kirkness E.F."/>
            <person name="Weinstock K.G."/>
            <person name="Merrick J.M."/>
            <person name="Glodek A."/>
            <person name="Scott J.L."/>
            <person name="Geoghagen N.S.M."/>
            <person name="Weidman J.F."/>
            <person name="Fuhrmann J.L."/>
            <person name="Nguyen D."/>
            <person name="Utterback T.R."/>
            <person name="Kelley J.M."/>
            <person name="Peterson J.D."/>
            <person name="Sadow P.W."/>
            <person name="Hanna M.C."/>
            <person name="Cotton M.D."/>
            <person name="Roberts K.M."/>
            <person name="Hurst M.A."/>
            <person name="Kaine B.P."/>
            <person name="Borodovsky M."/>
            <person name="Klenk H.-P."/>
            <person name="Fraser C.M."/>
            <person name="Smith H.O."/>
            <person name="Woese C.R."/>
            <person name="Venter J.C."/>
        </authorList>
    </citation>
    <scope>NUCLEOTIDE SEQUENCE [LARGE SCALE GENOMIC DNA]</scope>
    <source>
        <strain>ATCC 43067 / DSM 2661 / JAL-1 / JCM 10045 / NBRC 100440</strain>
    </source>
</reference>
<sequence length="269" mass="30192">MSEMMIVAVTGGKGGTGKSTLSANLFFYFIENYKTALIDCDVETPNLPYLTGCEDLFLAREVFIEVPNIEEGKTYNYNNVCKEGALLKVGDKLIFIEDLCSGCKACGINSNITFKKKSIGKIYEKKFDNGYLIVGKSNLGERKTAKIVTETKKYGLSKNCEINIVDTAAGTHCNVVRALINADKVLIVTEPTPFGVSDAKRIIKVVEKLNIPYKIVLNRYGISDLKIGYNFKIPYDKRIVECYCKGESFLKYNDLRNYIEEIANWIIWG</sequence>
<organism>
    <name type="scientific">Methanocaldococcus jannaschii (strain ATCC 43067 / DSM 2661 / JAL-1 / JCM 10045 / NBRC 100440)</name>
    <name type="common">Methanococcus jannaschii</name>
    <dbReference type="NCBI Taxonomy" id="243232"/>
    <lineage>
        <taxon>Archaea</taxon>
        <taxon>Methanobacteriati</taxon>
        <taxon>Methanobacteriota</taxon>
        <taxon>Methanomada group</taxon>
        <taxon>Methanococci</taxon>
        <taxon>Methanococcales</taxon>
        <taxon>Methanocaldococcaceae</taxon>
        <taxon>Methanocaldococcus</taxon>
    </lineage>
</organism>
<gene>
    <name type="ordered locus">MJ0579</name>
</gene>
<accession>Q57999</accession>
<name>Y579_METJA</name>
<evidence type="ECO:0000255" key="1"/>
<evidence type="ECO:0000305" key="2"/>
<keyword id="KW-0067">ATP-binding</keyword>
<keyword id="KW-0547">Nucleotide-binding</keyword>
<keyword id="KW-1185">Reference proteome</keyword>